<reference key="1">
    <citation type="submission" date="2006-12" db="EMBL/GenBank/DDBJ databases">
        <title>Complete sequence of Shewanella amazonensis SB2B.</title>
        <authorList>
            <consortium name="US DOE Joint Genome Institute"/>
            <person name="Copeland A."/>
            <person name="Lucas S."/>
            <person name="Lapidus A."/>
            <person name="Barry K."/>
            <person name="Detter J.C."/>
            <person name="Glavina del Rio T."/>
            <person name="Hammon N."/>
            <person name="Israni S."/>
            <person name="Dalin E."/>
            <person name="Tice H."/>
            <person name="Pitluck S."/>
            <person name="Munk A.C."/>
            <person name="Brettin T."/>
            <person name="Bruce D."/>
            <person name="Han C."/>
            <person name="Tapia R."/>
            <person name="Gilna P."/>
            <person name="Schmutz J."/>
            <person name="Larimer F."/>
            <person name="Land M."/>
            <person name="Hauser L."/>
            <person name="Kyrpides N."/>
            <person name="Mikhailova N."/>
            <person name="Fredrickson J."/>
            <person name="Richardson P."/>
        </authorList>
    </citation>
    <scope>NUCLEOTIDE SEQUENCE [LARGE SCALE GENOMIC DNA]</scope>
    <source>
        <strain>ATCC BAA-1098 / SB2B</strain>
    </source>
</reference>
<name>PANC_SHEAM</name>
<keyword id="KW-0067">ATP-binding</keyword>
<keyword id="KW-0963">Cytoplasm</keyword>
<keyword id="KW-0436">Ligase</keyword>
<keyword id="KW-0547">Nucleotide-binding</keyword>
<keyword id="KW-0566">Pantothenate biosynthesis</keyword>
<keyword id="KW-1185">Reference proteome</keyword>
<proteinExistence type="inferred from homology"/>
<sequence>MYTTAVIDEIRQQVRQWRASGETVAFVPTMGNLHAGHITLIKEAKQRADHVVASIFVNPMQFGKNEDLDAYPRTLAEDQAALTAAGCELLFTPTPDIIYPKGLDAQTFVEVPGISDELCGASRPGHFRGVATIVLKLFNIVQPDVALFGRKDYQQLLVIRTMVEDLSLPLEIVGVETVREASGLAMSSRNGYLTADEKARAAALKAALDALAMQIGAGTAIDAAITEANAALVTAGFRPDYLEVRSATTLALPTDADKELVVLAAAYLGKARLIDNLVFSR</sequence>
<accession>A1S3M6</accession>
<gene>
    <name evidence="1" type="primary">panC</name>
    <name type="ordered locus">Sama_0775</name>
</gene>
<organism>
    <name type="scientific">Shewanella amazonensis (strain ATCC BAA-1098 / SB2B)</name>
    <dbReference type="NCBI Taxonomy" id="326297"/>
    <lineage>
        <taxon>Bacteria</taxon>
        <taxon>Pseudomonadati</taxon>
        <taxon>Pseudomonadota</taxon>
        <taxon>Gammaproteobacteria</taxon>
        <taxon>Alteromonadales</taxon>
        <taxon>Shewanellaceae</taxon>
        <taxon>Shewanella</taxon>
    </lineage>
</organism>
<feature type="chain" id="PRO_0000305544" description="Pantothenate synthetase">
    <location>
        <begin position="1"/>
        <end position="281"/>
    </location>
</feature>
<feature type="active site" description="Proton donor" evidence="1">
    <location>
        <position position="37"/>
    </location>
</feature>
<feature type="binding site" evidence="1">
    <location>
        <begin position="30"/>
        <end position="37"/>
    </location>
    <ligand>
        <name>ATP</name>
        <dbReference type="ChEBI" id="CHEBI:30616"/>
    </ligand>
</feature>
<feature type="binding site" evidence="1">
    <location>
        <position position="61"/>
    </location>
    <ligand>
        <name>(R)-pantoate</name>
        <dbReference type="ChEBI" id="CHEBI:15980"/>
    </ligand>
</feature>
<feature type="binding site" evidence="1">
    <location>
        <position position="61"/>
    </location>
    <ligand>
        <name>beta-alanine</name>
        <dbReference type="ChEBI" id="CHEBI:57966"/>
    </ligand>
</feature>
<feature type="binding site" evidence="1">
    <location>
        <begin position="149"/>
        <end position="152"/>
    </location>
    <ligand>
        <name>ATP</name>
        <dbReference type="ChEBI" id="CHEBI:30616"/>
    </ligand>
</feature>
<feature type="binding site" evidence="1">
    <location>
        <position position="155"/>
    </location>
    <ligand>
        <name>(R)-pantoate</name>
        <dbReference type="ChEBI" id="CHEBI:15980"/>
    </ligand>
</feature>
<feature type="binding site" evidence="1">
    <location>
        <position position="178"/>
    </location>
    <ligand>
        <name>ATP</name>
        <dbReference type="ChEBI" id="CHEBI:30616"/>
    </ligand>
</feature>
<feature type="binding site" evidence="1">
    <location>
        <begin position="186"/>
        <end position="189"/>
    </location>
    <ligand>
        <name>ATP</name>
        <dbReference type="ChEBI" id="CHEBI:30616"/>
    </ligand>
</feature>
<dbReference type="EC" id="6.3.2.1" evidence="1"/>
<dbReference type="EMBL" id="CP000507">
    <property type="protein sequence ID" value="ABL98982.1"/>
    <property type="molecule type" value="Genomic_DNA"/>
</dbReference>
<dbReference type="RefSeq" id="WP_011758892.1">
    <property type="nucleotide sequence ID" value="NC_008700.1"/>
</dbReference>
<dbReference type="SMR" id="A1S3M6"/>
<dbReference type="STRING" id="326297.Sama_0775"/>
<dbReference type="KEGG" id="saz:Sama_0775"/>
<dbReference type="eggNOG" id="COG0414">
    <property type="taxonomic scope" value="Bacteria"/>
</dbReference>
<dbReference type="HOGENOM" id="CLU_047148_0_0_6"/>
<dbReference type="OrthoDB" id="9773087at2"/>
<dbReference type="UniPathway" id="UPA00028">
    <property type="reaction ID" value="UER00005"/>
</dbReference>
<dbReference type="Proteomes" id="UP000009175">
    <property type="component" value="Chromosome"/>
</dbReference>
<dbReference type="GO" id="GO:0005829">
    <property type="term" value="C:cytosol"/>
    <property type="evidence" value="ECO:0007669"/>
    <property type="project" value="TreeGrafter"/>
</dbReference>
<dbReference type="GO" id="GO:0005524">
    <property type="term" value="F:ATP binding"/>
    <property type="evidence" value="ECO:0007669"/>
    <property type="project" value="UniProtKB-KW"/>
</dbReference>
<dbReference type="GO" id="GO:0004592">
    <property type="term" value="F:pantoate-beta-alanine ligase activity"/>
    <property type="evidence" value="ECO:0007669"/>
    <property type="project" value="UniProtKB-UniRule"/>
</dbReference>
<dbReference type="GO" id="GO:0015940">
    <property type="term" value="P:pantothenate biosynthetic process"/>
    <property type="evidence" value="ECO:0007669"/>
    <property type="project" value="UniProtKB-UniRule"/>
</dbReference>
<dbReference type="CDD" id="cd00560">
    <property type="entry name" value="PanC"/>
    <property type="match status" value="1"/>
</dbReference>
<dbReference type="FunFam" id="3.40.50.620:FF:000013">
    <property type="entry name" value="Pantothenate synthetase"/>
    <property type="match status" value="1"/>
</dbReference>
<dbReference type="Gene3D" id="3.40.50.620">
    <property type="entry name" value="HUPs"/>
    <property type="match status" value="1"/>
</dbReference>
<dbReference type="Gene3D" id="3.30.1300.10">
    <property type="entry name" value="Pantoate-beta-alanine ligase, C-terminal domain"/>
    <property type="match status" value="1"/>
</dbReference>
<dbReference type="HAMAP" id="MF_00158">
    <property type="entry name" value="PanC"/>
    <property type="match status" value="1"/>
</dbReference>
<dbReference type="InterPro" id="IPR004821">
    <property type="entry name" value="Cyt_trans-like"/>
</dbReference>
<dbReference type="InterPro" id="IPR003721">
    <property type="entry name" value="Pantoate_ligase"/>
</dbReference>
<dbReference type="InterPro" id="IPR042176">
    <property type="entry name" value="Pantoate_ligase_C"/>
</dbReference>
<dbReference type="InterPro" id="IPR014729">
    <property type="entry name" value="Rossmann-like_a/b/a_fold"/>
</dbReference>
<dbReference type="NCBIfam" id="TIGR00125">
    <property type="entry name" value="cyt_tran_rel"/>
    <property type="match status" value="1"/>
</dbReference>
<dbReference type="NCBIfam" id="TIGR00018">
    <property type="entry name" value="panC"/>
    <property type="match status" value="1"/>
</dbReference>
<dbReference type="PANTHER" id="PTHR21299">
    <property type="entry name" value="CYTIDYLATE KINASE/PANTOATE-BETA-ALANINE LIGASE"/>
    <property type="match status" value="1"/>
</dbReference>
<dbReference type="PANTHER" id="PTHR21299:SF1">
    <property type="entry name" value="PANTOATE--BETA-ALANINE LIGASE"/>
    <property type="match status" value="1"/>
</dbReference>
<dbReference type="Pfam" id="PF02569">
    <property type="entry name" value="Pantoate_ligase"/>
    <property type="match status" value="1"/>
</dbReference>
<dbReference type="SUPFAM" id="SSF52374">
    <property type="entry name" value="Nucleotidylyl transferase"/>
    <property type="match status" value="1"/>
</dbReference>
<evidence type="ECO:0000255" key="1">
    <source>
        <dbReference type="HAMAP-Rule" id="MF_00158"/>
    </source>
</evidence>
<protein>
    <recommendedName>
        <fullName evidence="1">Pantothenate synthetase</fullName>
        <shortName evidence="1">PS</shortName>
        <ecNumber evidence="1">6.3.2.1</ecNumber>
    </recommendedName>
    <alternativeName>
        <fullName evidence="1">Pantoate--beta-alanine ligase</fullName>
    </alternativeName>
    <alternativeName>
        <fullName evidence="1">Pantoate-activating enzyme</fullName>
    </alternativeName>
</protein>
<comment type="function">
    <text evidence="1">Catalyzes the condensation of pantoate with beta-alanine in an ATP-dependent reaction via a pantoyl-adenylate intermediate.</text>
</comment>
<comment type="catalytic activity">
    <reaction evidence="1">
        <text>(R)-pantoate + beta-alanine + ATP = (R)-pantothenate + AMP + diphosphate + H(+)</text>
        <dbReference type="Rhea" id="RHEA:10912"/>
        <dbReference type="ChEBI" id="CHEBI:15378"/>
        <dbReference type="ChEBI" id="CHEBI:15980"/>
        <dbReference type="ChEBI" id="CHEBI:29032"/>
        <dbReference type="ChEBI" id="CHEBI:30616"/>
        <dbReference type="ChEBI" id="CHEBI:33019"/>
        <dbReference type="ChEBI" id="CHEBI:57966"/>
        <dbReference type="ChEBI" id="CHEBI:456215"/>
        <dbReference type="EC" id="6.3.2.1"/>
    </reaction>
</comment>
<comment type="pathway">
    <text evidence="1">Cofactor biosynthesis; (R)-pantothenate biosynthesis; (R)-pantothenate from (R)-pantoate and beta-alanine: step 1/1.</text>
</comment>
<comment type="subunit">
    <text evidence="1">Homodimer.</text>
</comment>
<comment type="subcellular location">
    <subcellularLocation>
        <location evidence="1">Cytoplasm</location>
    </subcellularLocation>
</comment>
<comment type="miscellaneous">
    <text evidence="1">The reaction proceeds by a bi uni uni bi ping pong mechanism.</text>
</comment>
<comment type="similarity">
    <text evidence="1">Belongs to the pantothenate synthetase family.</text>
</comment>